<name>COAA_BRUSU</name>
<reference key="1">
    <citation type="journal article" date="2002" name="Proc. Natl. Acad. Sci. U.S.A.">
        <title>The Brucella suis genome reveals fundamental similarities between animal and plant pathogens and symbionts.</title>
        <authorList>
            <person name="Paulsen I.T."/>
            <person name="Seshadri R."/>
            <person name="Nelson K.E."/>
            <person name="Eisen J.A."/>
            <person name="Heidelberg J.F."/>
            <person name="Read T.D."/>
            <person name="Dodson R.J."/>
            <person name="Umayam L.A."/>
            <person name="Brinkac L.M."/>
            <person name="Beanan M.J."/>
            <person name="Daugherty S.C."/>
            <person name="DeBoy R.T."/>
            <person name="Durkin A.S."/>
            <person name="Kolonay J.F."/>
            <person name="Madupu R."/>
            <person name="Nelson W.C."/>
            <person name="Ayodeji B."/>
            <person name="Kraul M."/>
            <person name="Shetty J."/>
            <person name="Malek J.A."/>
            <person name="Van Aken S.E."/>
            <person name="Riedmuller S."/>
            <person name="Tettelin H."/>
            <person name="Gill S.R."/>
            <person name="White O."/>
            <person name="Salzberg S.L."/>
            <person name="Hoover D.L."/>
            <person name="Lindler L.E."/>
            <person name="Halling S.M."/>
            <person name="Boyle S.M."/>
            <person name="Fraser C.M."/>
        </authorList>
    </citation>
    <scope>NUCLEOTIDE SEQUENCE [LARGE SCALE GENOMIC DNA]</scope>
    <source>
        <strain>1330</strain>
    </source>
</reference>
<reference key="2">
    <citation type="journal article" date="2011" name="J. Bacteriol.">
        <title>Revised genome sequence of Brucella suis 1330.</title>
        <authorList>
            <person name="Tae H."/>
            <person name="Shallom S."/>
            <person name="Settlage R."/>
            <person name="Preston D."/>
            <person name="Adams L.G."/>
            <person name="Garner H.R."/>
        </authorList>
    </citation>
    <scope>NUCLEOTIDE SEQUENCE [LARGE SCALE GENOMIC DNA]</scope>
    <source>
        <strain>1330</strain>
    </source>
</reference>
<organism>
    <name type="scientific">Brucella suis biovar 1 (strain 1330)</name>
    <dbReference type="NCBI Taxonomy" id="204722"/>
    <lineage>
        <taxon>Bacteria</taxon>
        <taxon>Pseudomonadati</taxon>
        <taxon>Pseudomonadota</taxon>
        <taxon>Alphaproteobacteria</taxon>
        <taxon>Hyphomicrobiales</taxon>
        <taxon>Brucellaceae</taxon>
        <taxon>Brucella/Ochrobactrum group</taxon>
        <taxon>Brucella</taxon>
    </lineage>
</organism>
<proteinExistence type="inferred from homology"/>
<protein>
    <recommendedName>
        <fullName evidence="1">Pantothenate kinase</fullName>
        <ecNumber evidence="1">2.7.1.33</ecNumber>
    </recommendedName>
    <alternativeName>
        <fullName evidence="1">Pantothenic acid kinase</fullName>
    </alternativeName>
</protein>
<gene>
    <name evidence="1" type="primary">coaA</name>
    <name type="ordered locus">BR2087</name>
    <name type="ordered locus">BS1330_I2081</name>
</gene>
<keyword id="KW-0067">ATP-binding</keyword>
<keyword id="KW-0173">Coenzyme A biosynthesis</keyword>
<keyword id="KW-0963">Cytoplasm</keyword>
<keyword id="KW-0418">Kinase</keyword>
<keyword id="KW-0547">Nucleotide-binding</keyword>
<keyword id="KW-0808">Transferase</keyword>
<dbReference type="EC" id="2.7.1.33" evidence="1"/>
<dbReference type="EMBL" id="AE014291">
    <property type="protein sequence ID" value="AAN30977.1"/>
    <property type="molecule type" value="Genomic_DNA"/>
</dbReference>
<dbReference type="EMBL" id="CP002997">
    <property type="protein sequence ID" value="AEM19394.1"/>
    <property type="molecule type" value="Genomic_DNA"/>
</dbReference>
<dbReference type="RefSeq" id="WP_004684544.1">
    <property type="nucleotide sequence ID" value="NZ_KN046804.1"/>
</dbReference>
<dbReference type="SMR" id="P63809"/>
<dbReference type="GeneID" id="97534650"/>
<dbReference type="KEGG" id="bms:BR2087"/>
<dbReference type="KEGG" id="bsi:BS1330_I2081"/>
<dbReference type="PATRIC" id="fig|204722.21.peg.1298"/>
<dbReference type="HOGENOM" id="CLU_053818_1_1_5"/>
<dbReference type="PhylomeDB" id="P63809"/>
<dbReference type="UniPathway" id="UPA00241">
    <property type="reaction ID" value="UER00352"/>
</dbReference>
<dbReference type="Proteomes" id="UP000007104">
    <property type="component" value="Chromosome I"/>
</dbReference>
<dbReference type="GO" id="GO:0005737">
    <property type="term" value="C:cytoplasm"/>
    <property type="evidence" value="ECO:0007669"/>
    <property type="project" value="UniProtKB-SubCell"/>
</dbReference>
<dbReference type="GO" id="GO:0005524">
    <property type="term" value="F:ATP binding"/>
    <property type="evidence" value="ECO:0007669"/>
    <property type="project" value="UniProtKB-UniRule"/>
</dbReference>
<dbReference type="GO" id="GO:0004594">
    <property type="term" value="F:pantothenate kinase activity"/>
    <property type="evidence" value="ECO:0007669"/>
    <property type="project" value="UniProtKB-UniRule"/>
</dbReference>
<dbReference type="GO" id="GO:0015937">
    <property type="term" value="P:coenzyme A biosynthetic process"/>
    <property type="evidence" value="ECO:0007669"/>
    <property type="project" value="UniProtKB-UniRule"/>
</dbReference>
<dbReference type="CDD" id="cd02025">
    <property type="entry name" value="PanK"/>
    <property type="match status" value="1"/>
</dbReference>
<dbReference type="Gene3D" id="3.40.50.300">
    <property type="entry name" value="P-loop containing nucleotide triphosphate hydrolases"/>
    <property type="match status" value="1"/>
</dbReference>
<dbReference type="HAMAP" id="MF_00215">
    <property type="entry name" value="Pantothen_kinase_1"/>
    <property type="match status" value="1"/>
</dbReference>
<dbReference type="InterPro" id="IPR027417">
    <property type="entry name" value="P-loop_NTPase"/>
</dbReference>
<dbReference type="InterPro" id="IPR004566">
    <property type="entry name" value="PanK"/>
</dbReference>
<dbReference type="InterPro" id="IPR006083">
    <property type="entry name" value="PRK/URK"/>
</dbReference>
<dbReference type="NCBIfam" id="TIGR00554">
    <property type="entry name" value="panK_bact"/>
    <property type="match status" value="1"/>
</dbReference>
<dbReference type="PANTHER" id="PTHR10285">
    <property type="entry name" value="URIDINE KINASE"/>
    <property type="match status" value="1"/>
</dbReference>
<dbReference type="Pfam" id="PF00485">
    <property type="entry name" value="PRK"/>
    <property type="match status" value="1"/>
</dbReference>
<dbReference type="PIRSF" id="PIRSF000545">
    <property type="entry name" value="Pantothenate_kin"/>
    <property type="match status" value="1"/>
</dbReference>
<dbReference type="SUPFAM" id="SSF52540">
    <property type="entry name" value="P-loop containing nucleoside triphosphate hydrolases"/>
    <property type="match status" value="1"/>
</dbReference>
<feature type="chain" id="PRO_0000194422" description="Pantothenate kinase">
    <location>
        <begin position="1"/>
        <end position="322"/>
    </location>
</feature>
<feature type="binding site" evidence="1">
    <location>
        <begin position="100"/>
        <end position="107"/>
    </location>
    <ligand>
        <name>ATP</name>
        <dbReference type="ChEBI" id="CHEBI:30616"/>
    </ligand>
</feature>
<accession>P63809</accession>
<accession>G0K935</accession>
<accession>Q8YE39</accession>
<sequence length="322" mass="37477">MWEKVDQLTPSRYSPYRFFSAQEWAAFRADTPLTLTYEEVKRLRSLGDPIDLDEVRRIYLSLSRLLYAHVEASQLLFRQRQQFLNMEESYKTPFIIGVAGSVAVGKSTMARILKELLARWPSSPKVDLVTTDGFLYPNAVLREQNMMERKGFPESYDIGAVLRFLSAIKAGMSRVRAPLYSHLSYDVLPGEYQIVDKPDILIFEGINVLQVRDLPEDGKMVPFVSDFFDFSIYIDADPRLIHKWYIDRFMRLRETAFRDPQSFFHRYSQLSQEAARSIAEGLWQNINLKNLNENILPTRPRADLILRKGSDHLIEEVALRKI</sequence>
<comment type="catalytic activity">
    <reaction evidence="1">
        <text>(R)-pantothenate + ATP = (R)-4'-phosphopantothenate + ADP + H(+)</text>
        <dbReference type="Rhea" id="RHEA:16373"/>
        <dbReference type="ChEBI" id="CHEBI:10986"/>
        <dbReference type="ChEBI" id="CHEBI:15378"/>
        <dbReference type="ChEBI" id="CHEBI:29032"/>
        <dbReference type="ChEBI" id="CHEBI:30616"/>
        <dbReference type="ChEBI" id="CHEBI:456216"/>
        <dbReference type="EC" id="2.7.1.33"/>
    </reaction>
</comment>
<comment type="pathway">
    <text evidence="1">Cofactor biosynthesis; coenzyme A biosynthesis; CoA from (R)-pantothenate: step 1/5.</text>
</comment>
<comment type="subcellular location">
    <subcellularLocation>
        <location evidence="1">Cytoplasm</location>
    </subcellularLocation>
</comment>
<comment type="similarity">
    <text evidence="1">Belongs to the prokaryotic pantothenate kinase family.</text>
</comment>
<evidence type="ECO:0000255" key="1">
    <source>
        <dbReference type="HAMAP-Rule" id="MF_00215"/>
    </source>
</evidence>